<reference key="1">
    <citation type="journal article" date="1998" name="Science">
        <title>Complete genome sequence of Treponema pallidum, the syphilis spirochete.</title>
        <authorList>
            <person name="Fraser C.M."/>
            <person name="Norris S.J."/>
            <person name="Weinstock G.M."/>
            <person name="White O."/>
            <person name="Sutton G.G."/>
            <person name="Dodson R.J."/>
            <person name="Gwinn M.L."/>
            <person name="Hickey E.K."/>
            <person name="Clayton R.A."/>
            <person name="Ketchum K.A."/>
            <person name="Sodergren E."/>
            <person name="Hardham J.M."/>
            <person name="McLeod M.P."/>
            <person name="Salzberg S.L."/>
            <person name="Peterson J.D."/>
            <person name="Khalak H.G."/>
            <person name="Richardson D.L."/>
            <person name="Howell J.K."/>
            <person name="Chidambaram M."/>
            <person name="Utterback T.R."/>
            <person name="McDonald L.A."/>
            <person name="Artiach P."/>
            <person name="Bowman C."/>
            <person name="Cotton M.D."/>
            <person name="Fujii C."/>
            <person name="Garland S.A."/>
            <person name="Hatch B."/>
            <person name="Horst K."/>
            <person name="Roberts K.M."/>
            <person name="Sandusky M."/>
            <person name="Weidman J.F."/>
            <person name="Smith H.O."/>
            <person name="Venter J.C."/>
        </authorList>
    </citation>
    <scope>NUCLEOTIDE SEQUENCE [LARGE SCALE GENOMIC DNA]</scope>
    <source>
        <strain>Nichols</strain>
    </source>
</reference>
<comment type="function">
    <text evidence="1">ATP-dependent specificity component of the Clp protease. It directs the protease to specific substrates. Can perform chaperone functions in the absence of ClpP.</text>
</comment>
<comment type="subunit">
    <text evidence="1">Component of the ClpX-ClpP complex. Forms a hexameric ring that, in the presence of ATP, binds to fourteen ClpP subunits assembled into a disk-like structure with a central cavity, resembling the structure of eukaryotic proteasomes.</text>
</comment>
<comment type="similarity">
    <text evidence="1">Belongs to the ClpX chaperone family.</text>
</comment>
<name>CLPX_TREPA</name>
<evidence type="ECO:0000255" key="1">
    <source>
        <dbReference type="HAMAP-Rule" id="MF_00175"/>
    </source>
</evidence>
<evidence type="ECO:0000255" key="2">
    <source>
        <dbReference type="PROSITE-ProRule" id="PRU01250"/>
    </source>
</evidence>
<accession>O83521</accession>
<sequence length="415" mass="45478">MLRSKGDLVLGCSFCGKKEDERRRIVTGHGVSICNYCVERCAEYLRDRKPSALALMTKEEIPTPLELKAYLDQYVIGQDLAKRVLSVAVYNHYKRVAGRSLDIDSVLIEKSNVLLIGPTGSGKTLLAKTLSQKMKVPFAIADATTLTEAGYVGEDVENILLKLVQNANGDVALAERGIIFIDEIDKISRKSENVSITRDVSGEGVQQALLKIIEGTIASVPPQGGRKHPNQDMLRVDTSNILFICGGAFVGLDGIVGTRVCKNPVGFGADVKTVKERGLQLMHEDVIPDDLVKFGLIPEIIGRLPVTVALDALSKEDLRNILVRPRNAIVRQFEALFALDDVRLVFDEDALDAIAQQAIDQKTGARGLRSIVERLMLDAMFEAPSLKGKKELCITKKVVTQEEKASVRLVSERTA</sequence>
<protein>
    <recommendedName>
        <fullName evidence="1">ATP-dependent Clp protease ATP-binding subunit ClpX</fullName>
    </recommendedName>
</protein>
<keyword id="KW-0067">ATP-binding</keyword>
<keyword id="KW-0143">Chaperone</keyword>
<keyword id="KW-0479">Metal-binding</keyword>
<keyword id="KW-0547">Nucleotide-binding</keyword>
<keyword id="KW-1185">Reference proteome</keyword>
<keyword id="KW-0862">Zinc</keyword>
<proteinExistence type="inferred from homology"/>
<dbReference type="EMBL" id="AE000520">
    <property type="protein sequence ID" value="AAC65496.1"/>
    <property type="molecule type" value="Genomic_DNA"/>
</dbReference>
<dbReference type="PIR" id="C71314">
    <property type="entry name" value="C71314"/>
</dbReference>
<dbReference type="RefSeq" id="WP_010881957.1">
    <property type="nucleotide sequence ID" value="NC_021490.2"/>
</dbReference>
<dbReference type="SMR" id="O83521"/>
<dbReference type="IntAct" id="O83521">
    <property type="interactions" value="3"/>
</dbReference>
<dbReference type="STRING" id="243276.TP_0508"/>
<dbReference type="EnsemblBacteria" id="AAC65496">
    <property type="protein sequence ID" value="AAC65496"/>
    <property type="gene ID" value="TP_0508"/>
</dbReference>
<dbReference type="GeneID" id="93876277"/>
<dbReference type="KEGG" id="tpa:TP_0508"/>
<dbReference type="KEGG" id="tpw:TPANIC_0508"/>
<dbReference type="eggNOG" id="COG1219">
    <property type="taxonomic scope" value="Bacteria"/>
</dbReference>
<dbReference type="HOGENOM" id="CLU_014218_8_2_12"/>
<dbReference type="OrthoDB" id="9804062at2"/>
<dbReference type="Proteomes" id="UP000000811">
    <property type="component" value="Chromosome"/>
</dbReference>
<dbReference type="GO" id="GO:0009376">
    <property type="term" value="C:HslUV protease complex"/>
    <property type="evidence" value="ECO:0007669"/>
    <property type="project" value="TreeGrafter"/>
</dbReference>
<dbReference type="GO" id="GO:0005524">
    <property type="term" value="F:ATP binding"/>
    <property type="evidence" value="ECO:0007669"/>
    <property type="project" value="UniProtKB-UniRule"/>
</dbReference>
<dbReference type="GO" id="GO:0016887">
    <property type="term" value="F:ATP hydrolysis activity"/>
    <property type="evidence" value="ECO:0007669"/>
    <property type="project" value="InterPro"/>
</dbReference>
<dbReference type="GO" id="GO:0140662">
    <property type="term" value="F:ATP-dependent protein folding chaperone"/>
    <property type="evidence" value="ECO:0007669"/>
    <property type="project" value="InterPro"/>
</dbReference>
<dbReference type="GO" id="GO:0046983">
    <property type="term" value="F:protein dimerization activity"/>
    <property type="evidence" value="ECO:0007669"/>
    <property type="project" value="InterPro"/>
</dbReference>
<dbReference type="GO" id="GO:0051082">
    <property type="term" value="F:unfolded protein binding"/>
    <property type="evidence" value="ECO:0007669"/>
    <property type="project" value="UniProtKB-UniRule"/>
</dbReference>
<dbReference type="GO" id="GO:0008270">
    <property type="term" value="F:zinc ion binding"/>
    <property type="evidence" value="ECO:0007669"/>
    <property type="project" value="InterPro"/>
</dbReference>
<dbReference type="GO" id="GO:0051301">
    <property type="term" value="P:cell division"/>
    <property type="evidence" value="ECO:0007669"/>
    <property type="project" value="TreeGrafter"/>
</dbReference>
<dbReference type="GO" id="GO:0051603">
    <property type="term" value="P:proteolysis involved in protein catabolic process"/>
    <property type="evidence" value="ECO:0007669"/>
    <property type="project" value="TreeGrafter"/>
</dbReference>
<dbReference type="CDD" id="cd19497">
    <property type="entry name" value="RecA-like_ClpX"/>
    <property type="match status" value="1"/>
</dbReference>
<dbReference type="FunFam" id="1.10.8.60:FF:000002">
    <property type="entry name" value="ATP-dependent Clp protease ATP-binding subunit ClpX"/>
    <property type="match status" value="1"/>
</dbReference>
<dbReference type="FunFam" id="3.40.50.300:FF:000005">
    <property type="entry name" value="ATP-dependent Clp protease ATP-binding subunit ClpX"/>
    <property type="match status" value="1"/>
</dbReference>
<dbReference type="Gene3D" id="1.10.8.60">
    <property type="match status" value="1"/>
</dbReference>
<dbReference type="Gene3D" id="6.20.220.10">
    <property type="entry name" value="ClpX chaperone, C4-type zinc finger domain"/>
    <property type="match status" value="1"/>
</dbReference>
<dbReference type="Gene3D" id="3.40.50.300">
    <property type="entry name" value="P-loop containing nucleotide triphosphate hydrolases"/>
    <property type="match status" value="1"/>
</dbReference>
<dbReference type="HAMAP" id="MF_00175">
    <property type="entry name" value="ClpX"/>
    <property type="match status" value="1"/>
</dbReference>
<dbReference type="InterPro" id="IPR003593">
    <property type="entry name" value="AAA+_ATPase"/>
</dbReference>
<dbReference type="InterPro" id="IPR050052">
    <property type="entry name" value="ATP-dep_Clp_protease_ClpX"/>
</dbReference>
<dbReference type="InterPro" id="IPR003959">
    <property type="entry name" value="ATPase_AAA_core"/>
</dbReference>
<dbReference type="InterPro" id="IPR019489">
    <property type="entry name" value="Clp_ATPase_C"/>
</dbReference>
<dbReference type="InterPro" id="IPR004487">
    <property type="entry name" value="Clp_protease_ATP-bd_su_ClpX"/>
</dbReference>
<dbReference type="InterPro" id="IPR046425">
    <property type="entry name" value="ClpX_bact"/>
</dbReference>
<dbReference type="InterPro" id="IPR027417">
    <property type="entry name" value="P-loop_NTPase"/>
</dbReference>
<dbReference type="InterPro" id="IPR010603">
    <property type="entry name" value="Znf_CppX_C4"/>
</dbReference>
<dbReference type="InterPro" id="IPR038366">
    <property type="entry name" value="Znf_CppX_C4_sf"/>
</dbReference>
<dbReference type="NCBIfam" id="TIGR00382">
    <property type="entry name" value="clpX"/>
    <property type="match status" value="1"/>
</dbReference>
<dbReference type="NCBIfam" id="NF003745">
    <property type="entry name" value="PRK05342.1"/>
    <property type="match status" value="1"/>
</dbReference>
<dbReference type="PANTHER" id="PTHR48102:SF7">
    <property type="entry name" value="ATP-DEPENDENT CLP PROTEASE ATP-BINDING SUBUNIT CLPX-LIKE, MITOCHONDRIAL"/>
    <property type="match status" value="1"/>
</dbReference>
<dbReference type="PANTHER" id="PTHR48102">
    <property type="entry name" value="ATP-DEPENDENT CLP PROTEASE ATP-BINDING SUBUNIT CLPX-LIKE, MITOCHONDRIAL-RELATED"/>
    <property type="match status" value="1"/>
</dbReference>
<dbReference type="Pfam" id="PF07724">
    <property type="entry name" value="AAA_2"/>
    <property type="match status" value="1"/>
</dbReference>
<dbReference type="Pfam" id="PF10431">
    <property type="entry name" value="ClpB_D2-small"/>
    <property type="match status" value="1"/>
</dbReference>
<dbReference type="Pfam" id="PF06689">
    <property type="entry name" value="zf-C4_ClpX"/>
    <property type="match status" value="1"/>
</dbReference>
<dbReference type="SMART" id="SM00382">
    <property type="entry name" value="AAA"/>
    <property type="match status" value="1"/>
</dbReference>
<dbReference type="SMART" id="SM01086">
    <property type="entry name" value="ClpB_D2-small"/>
    <property type="match status" value="1"/>
</dbReference>
<dbReference type="SMART" id="SM00994">
    <property type="entry name" value="zf-C4_ClpX"/>
    <property type="match status" value="1"/>
</dbReference>
<dbReference type="SUPFAM" id="SSF57716">
    <property type="entry name" value="Glucocorticoid receptor-like (DNA-binding domain)"/>
    <property type="match status" value="1"/>
</dbReference>
<dbReference type="SUPFAM" id="SSF52540">
    <property type="entry name" value="P-loop containing nucleoside triphosphate hydrolases"/>
    <property type="match status" value="1"/>
</dbReference>
<dbReference type="PROSITE" id="PS51902">
    <property type="entry name" value="CLPX_ZB"/>
    <property type="match status" value="1"/>
</dbReference>
<organism>
    <name type="scientific">Treponema pallidum (strain Nichols)</name>
    <dbReference type="NCBI Taxonomy" id="243276"/>
    <lineage>
        <taxon>Bacteria</taxon>
        <taxon>Pseudomonadati</taxon>
        <taxon>Spirochaetota</taxon>
        <taxon>Spirochaetia</taxon>
        <taxon>Spirochaetales</taxon>
        <taxon>Treponemataceae</taxon>
        <taxon>Treponema</taxon>
    </lineage>
</organism>
<feature type="chain" id="PRO_0000160448" description="ATP-dependent Clp protease ATP-binding subunit ClpX">
    <location>
        <begin position="1"/>
        <end position="415"/>
    </location>
</feature>
<feature type="domain" description="ClpX-type ZB" evidence="2">
    <location>
        <begin position="1"/>
        <end position="53"/>
    </location>
</feature>
<feature type="binding site" evidence="2">
    <location>
        <position position="12"/>
    </location>
    <ligand>
        <name>Zn(2+)</name>
        <dbReference type="ChEBI" id="CHEBI:29105"/>
    </ligand>
</feature>
<feature type="binding site" evidence="2">
    <location>
        <position position="15"/>
    </location>
    <ligand>
        <name>Zn(2+)</name>
        <dbReference type="ChEBI" id="CHEBI:29105"/>
    </ligand>
</feature>
<feature type="binding site" evidence="2">
    <location>
        <position position="34"/>
    </location>
    <ligand>
        <name>Zn(2+)</name>
        <dbReference type="ChEBI" id="CHEBI:29105"/>
    </ligand>
</feature>
<feature type="binding site" evidence="2">
    <location>
        <position position="37"/>
    </location>
    <ligand>
        <name>Zn(2+)</name>
        <dbReference type="ChEBI" id="CHEBI:29105"/>
    </ligand>
</feature>
<feature type="binding site" evidence="1">
    <location>
        <begin position="118"/>
        <end position="125"/>
    </location>
    <ligand>
        <name>ATP</name>
        <dbReference type="ChEBI" id="CHEBI:30616"/>
    </ligand>
</feature>
<gene>
    <name evidence="1" type="primary">clpX</name>
    <name type="ordered locus">TP_0508</name>
</gene>